<organism>
    <name type="scientific">Pseudomonas putida (strain W619)</name>
    <dbReference type="NCBI Taxonomy" id="390235"/>
    <lineage>
        <taxon>Bacteria</taxon>
        <taxon>Pseudomonadati</taxon>
        <taxon>Pseudomonadota</taxon>
        <taxon>Gammaproteobacteria</taxon>
        <taxon>Pseudomonadales</taxon>
        <taxon>Pseudomonadaceae</taxon>
        <taxon>Pseudomonas</taxon>
    </lineage>
</organism>
<feature type="chain" id="PRO_0000372034" description="GTP cyclohydrolase FolE2">
    <location>
        <begin position="1"/>
        <end position="295"/>
    </location>
</feature>
<feature type="site" description="May be catalytically important" evidence="1">
    <location>
        <position position="149"/>
    </location>
</feature>
<proteinExistence type="inferred from homology"/>
<reference key="1">
    <citation type="submission" date="2008-02" db="EMBL/GenBank/DDBJ databases">
        <title>Complete sequence of Pseudomonas putida W619.</title>
        <authorList>
            <person name="Copeland A."/>
            <person name="Lucas S."/>
            <person name="Lapidus A."/>
            <person name="Barry K."/>
            <person name="Detter J.C."/>
            <person name="Glavina del Rio T."/>
            <person name="Dalin E."/>
            <person name="Tice H."/>
            <person name="Pitluck S."/>
            <person name="Chain P."/>
            <person name="Malfatti S."/>
            <person name="Shin M."/>
            <person name="Vergez L."/>
            <person name="Schmutz J."/>
            <person name="Larimer F."/>
            <person name="Land M."/>
            <person name="Hauser L."/>
            <person name="Kyrpides N."/>
            <person name="Kim E."/>
            <person name="Taghavi S."/>
            <person name="Vangronsveld D."/>
            <person name="van der Lelie D."/>
            <person name="Richardson P."/>
        </authorList>
    </citation>
    <scope>NUCLEOTIDE SEQUENCE [LARGE SCALE GENOMIC DNA]</scope>
    <source>
        <strain>W619</strain>
    </source>
</reference>
<keyword id="KW-0378">Hydrolase</keyword>
<sequence length="295" mass="32440">MTSLTLPDIAAQKHQHATPLAWVGMCGIALPVHFDGRSVAAMADAGVSLEDGSSRGIHMSRLYLSLERLERQSLTPLAIRQILADFLASHEGLSHAAYLRLTFDHLLKRPALVSPLAGWKSYSITVDAKIENGMFHVELSVRVPYSSTCPCSAALARQLIQQQFQADFSGQAINREAVLEWLGSSHGIVATPHSQRSLAEVNVRLGDRLEVLPVTELIDRIEASLGTAVQTAVKRADEQAFALANGQNLMFCEDAARRLHQALQQMDWAKAFKLRVEHAESLHAHDAVAASQWQW</sequence>
<name>GCH4_PSEPW</name>
<gene>
    <name evidence="1" type="primary">folE2</name>
    <name type="ordered locus">PputW619_5141</name>
</gene>
<protein>
    <recommendedName>
        <fullName evidence="1">GTP cyclohydrolase FolE2</fullName>
        <ecNumber evidence="1">3.5.4.16</ecNumber>
    </recommendedName>
</protein>
<comment type="function">
    <text evidence="1">Converts GTP to 7,8-dihydroneopterin triphosphate.</text>
</comment>
<comment type="catalytic activity">
    <reaction evidence="1">
        <text>GTP + H2O = 7,8-dihydroneopterin 3'-triphosphate + formate + H(+)</text>
        <dbReference type="Rhea" id="RHEA:17473"/>
        <dbReference type="ChEBI" id="CHEBI:15377"/>
        <dbReference type="ChEBI" id="CHEBI:15378"/>
        <dbReference type="ChEBI" id="CHEBI:15740"/>
        <dbReference type="ChEBI" id="CHEBI:37565"/>
        <dbReference type="ChEBI" id="CHEBI:58462"/>
        <dbReference type="EC" id="3.5.4.16"/>
    </reaction>
</comment>
<comment type="pathway">
    <text evidence="1">Cofactor biosynthesis; 7,8-dihydroneopterin triphosphate biosynthesis; 7,8-dihydroneopterin triphosphate from GTP: step 1/1.</text>
</comment>
<comment type="similarity">
    <text evidence="1">Belongs to the GTP cyclohydrolase IV family.</text>
</comment>
<accession>B1JFN3</accession>
<dbReference type="EC" id="3.5.4.16" evidence="1"/>
<dbReference type="EMBL" id="CP000949">
    <property type="protein sequence ID" value="ACA75617.1"/>
    <property type="molecule type" value="Genomic_DNA"/>
</dbReference>
<dbReference type="SMR" id="B1JFN3"/>
<dbReference type="STRING" id="390235.PputW619_5141"/>
<dbReference type="KEGG" id="ppw:PputW619_5141"/>
<dbReference type="eggNOG" id="COG1469">
    <property type="taxonomic scope" value="Bacteria"/>
</dbReference>
<dbReference type="HOGENOM" id="CLU_062816_0_0_6"/>
<dbReference type="OrthoDB" id="239637at2"/>
<dbReference type="UniPathway" id="UPA00848">
    <property type="reaction ID" value="UER00151"/>
</dbReference>
<dbReference type="GO" id="GO:0003934">
    <property type="term" value="F:GTP cyclohydrolase I activity"/>
    <property type="evidence" value="ECO:0007669"/>
    <property type="project" value="UniProtKB-UniRule"/>
</dbReference>
<dbReference type="GO" id="GO:0046654">
    <property type="term" value="P:tetrahydrofolate biosynthetic process"/>
    <property type="evidence" value="ECO:0007669"/>
    <property type="project" value="UniProtKB-UniRule"/>
</dbReference>
<dbReference type="Gene3D" id="3.10.270.10">
    <property type="entry name" value="Urate Oxidase"/>
    <property type="match status" value="1"/>
</dbReference>
<dbReference type="HAMAP" id="MF_01527_B">
    <property type="entry name" value="GTP_cyclohydrol_B"/>
    <property type="match status" value="1"/>
</dbReference>
<dbReference type="InterPro" id="IPR022838">
    <property type="entry name" value="GTP_cyclohydrolase_FolE2"/>
</dbReference>
<dbReference type="InterPro" id="IPR003801">
    <property type="entry name" value="GTP_cyclohydrolase_FolE2/MptA"/>
</dbReference>
<dbReference type="NCBIfam" id="NF010200">
    <property type="entry name" value="PRK13674.1-1"/>
    <property type="match status" value="1"/>
</dbReference>
<dbReference type="PANTHER" id="PTHR36445">
    <property type="entry name" value="GTP CYCLOHYDROLASE MPTA"/>
    <property type="match status" value="1"/>
</dbReference>
<dbReference type="PANTHER" id="PTHR36445:SF1">
    <property type="entry name" value="GTP CYCLOHYDROLASE MPTA"/>
    <property type="match status" value="1"/>
</dbReference>
<dbReference type="Pfam" id="PF02649">
    <property type="entry name" value="GCHY-1"/>
    <property type="match status" value="1"/>
</dbReference>
<evidence type="ECO:0000255" key="1">
    <source>
        <dbReference type="HAMAP-Rule" id="MF_01527"/>
    </source>
</evidence>